<sequence>MSNSNIDNDLDKIDSLLKKAKSKKIPVTYDDINKALPLNKNPSIRQLEEAILKFSDAGVDILESNEDDEIKLDIGMDEEFKLSTNVDNEPEDEVEEENIGTTDDPVRLYLKDMGGVDLLTRENEVEIAKRIEEGRKTMTASLCKSPIAMRCFIVWYEDLVNEKMLLRDLIDLEANMLHDETPENDEEHSSETEGEEHEDNHLSMSRVETQILPNIIERMKKISFICEELLIEAKKCYEKSFEPKVLQNSKKYNNNLELLINEVSEIHFNSKRTEEILGKMYGINRDLINKEIAFLKLAEKYGVTRQNFLDEYIGSVINAAWKEKMLKNKKVAWKELITKESDYIDQMIAELSVIESNTGLLVNDFKKLVNTIQKSERQTLQAKKDMIEANLRLVISIAKKYANRGLQFLDLIQEGNIGLMKAVDKFEYRRGYKFSTYATWWIRQAITRAIADQARTIRIPVHMIETINKILRTSRQMLNELGYEPTATEIANRLSMPLDKVRKVMKIAKEPISLENPVGDDSDGGQLGDFIEDKNAVAPIDAAIQSNLREVTTRVLATLTPREERVLRMRFGIGMNTDHTLEEVGQQFKVTRERIRQIESKALRKLQHPIRSKKLNSFRSGGKRGEGNPSDLLEA</sequence>
<comment type="function">
    <text evidence="1">Sigma factors are initiation factors that promote the attachment of RNA polymerase to specific initiation sites and are then released. This sigma factor is the primary sigma factor during exponential growth.</text>
</comment>
<comment type="subunit">
    <text evidence="1">Interacts transiently with the RNA polymerase catalytic core.</text>
</comment>
<comment type="subcellular location">
    <subcellularLocation>
        <location evidence="1">Cytoplasm</location>
    </subcellularLocation>
</comment>
<comment type="similarity">
    <text evidence="1">Belongs to the sigma-70 factor family. RpoD/SigA subfamily.</text>
</comment>
<accession>Q4UJT1</accession>
<organism>
    <name type="scientific">Rickettsia felis (strain ATCC VR-1525 / URRWXCal2)</name>
    <name type="common">Rickettsia azadi</name>
    <dbReference type="NCBI Taxonomy" id="315456"/>
    <lineage>
        <taxon>Bacteria</taxon>
        <taxon>Pseudomonadati</taxon>
        <taxon>Pseudomonadota</taxon>
        <taxon>Alphaproteobacteria</taxon>
        <taxon>Rickettsiales</taxon>
        <taxon>Rickettsiaceae</taxon>
        <taxon>Rickettsieae</taxon>
        <taxon>Rickettsia</taxon>
        <taxon>spotted fever group</taxon>
    </lineage>
</organism>
<protein>
    <recommendedName>
        <fullName evidence="1">RNA polymerase sigma factor RpoD</fullName>
    </recommendedName>
    <alternativeName>
        <fullName evidence="1">Sigma-70</fullName>
    </alternativeName>
</protein>
<gene>
    <name evidence="1" type="primary">rpoD</name>
    <name type="ordered locus">RF_1357</name>
</gene>
<keyword id="KW-0963">Cytoplasm</keyword>
<keyword id="KW-0238">DNA-binding</keyword>
<keyword id="KW-0731">Sigma factor</keyword>
<keyword id="KW-0804">Transcription</keyword>
<keyword id="KW-0805">Transcription regulation</keyword>
<feature type="chain" id="PRO_0000286505" description="RNA polymerase sigma factor RpoD">
    <location>
        <begin position="1"/>
        <end position="635"/>
    </location>
</feature>
<feature type="DNA-binding region" description="H-T-H motif" evidence="1">
    <location>
        <begin position="581"/>
        <end position="600"/>
    </location>
</feature>
<feature type="region of interest" description="Disordered" evidence="2">
    <location>
        <begin position="177"/>
        <end position="204"/>
    </location>
</feature>
<feature type="region of interest" description="Sigma-70 factor domain-2" evidence="1">
    <location>
        <begin position="386"/>
        <end position="456"/>
    </location>
</feature>
<feature type="region of interest" description="Sigma-70 factor domain-3" evidence="1">
    <location>
        <begin position="465"/>
        <end position="542"/>
    </location>
</feature>
<feature type="region of interest" description="Sigma-70 factor domain-4" evidence="1">
    <location>
        <begin position="555"/>
        <end position="608"/>
    </location>
</feature>
<feature type="region of interest" description="Disordered" evidence="2">
    <location>
        <begin position="609"/>
        <end position="635"/>
    </location>
</feature>
<feature type="short sequence motif" description="Interaction with polymerase core subunit RpoC">
    <location>
        <begin position="410"/>
        <end position="413"/>
    </location>
</feature>
<feature type="compositionally biased region" description="Basic and acidic residues" evidence="2">
    <location>
        <begin position="177"/>
        <end position="191"/>
    </location>
</feature>
<name>RPOD_RICFE</name>
<reference key="1">
    <citation type="journal article" date="2005" name="PLoS Biol.">
        <title>The genome sequence of Rickettsia felis identifies the first putative conjugative plasmid in an obligate intracellular parasite.</title>
        <authorList>
            <person name="Ogata H."/>
            <person name="Renesto P."/>
            <person name="Audic S."/>
            <person name="Robert C."/>
            <person name="Blanc G."/>
            <person name="Fournier P.-E."/>
            <person name="Parinello H."/>
            <person name="Claverie J.-M."/>
            <person name="Raoult D."/>
        </authorList>
    </citation>
    <scope>NUCLEOTIDE SEQUENCE [LARGE SCALE GENOMIC DNA]</scope>
    <source>
        <strain>ATCC VR-1525 / URRWXCal2</strain>
    </source>
</reference>
<proteinExistence type="inferred from homology"/>
<evidence type="ECO:0000255" key="1">
    <source>
        <dbReference type="HAMAP-Rule" id="MF_00963"/>
    </source>
</evidence>
<evidence type="ECO:0000256" key="2">
    <source>
        <dbReference type="SAM" id="MobiDB-lite"/>
    </source>
</evidence>
<dbReference type="EMBL" id="CP000053">
    <property type="protein sequence ID" value="AAY62208.1"/>
    <property type="molecule type" value="Genomic_DNA"/>
</dbReference>
<dbReference type="SMR" id="Q4UJT1"/>
<dbReference type="STRING" id="315456.RF_1357"/>
<dbReference type="KEGG" id="rfe:RF_1357"/>
<dbReference type="eggNOG" id="COG0568">
    <property type="taxonomic scope" value="Bacteria"/>
</dbReference>
<dbReference type="HOGENOM" id="CLU_014793_7_2_5"/>
<dbReference type="OrthoDB" id="9809557at2"/>
<dbReference type="Proteomes" id="UP000008548">
    <property type="component" value="Chromosome"/>
</dbReference>
<dbReference type="GO" id="GO:0005737">
    <property type="term" value="C:cytoplasm"/>
    <property type="evidence" value="ECO:0007669"/>
    <property type="project" value="UniProtKB-SubCell"/>
</dbReference>
<dbReference type="GO" id="GO:0003677">
    <property type="term" value="F:DNA binding"/>
    <property type="evidence" value="ECO:0007669"/>
    <property type="project" value="UniProtKB-UniRule"/>
</dbReference>
<dbReference type="GO" id="GO:0016987">
    <property type="term" value="F:sigma factor activity"/>
    <property type="evidence" value="ECO:0007669"/>
    <property type="project" value="UniProtKB-UniRule"/>
</dbReference>
<dbReference type="GO" id="GO:0006352">
    <property type="term" value="P:DNA-templated transcription initiation"/>
    <property type="evidence" value="ECO:0007669"/>
    <property type="project" value="UniProtKB-UniRule"/>
</dbReference>
<dbReference type="CDD" id="cd06171">
    <property type="entry name" value="Sigma70_r4"/>
    <property type="match status" value="1"/>
</dbReference>
<dbReference type="FunFam" id="1.10.601.10:FF:000001">
    <property type="entry name" value="RNA polymerase sigma factor SigA"/>
    <property type="match status" value="1"/>
</dbReference>
<dbReference type="Gene3D" id="1.10.601.10">
    <property type="entry name" value="RNA Polymerase Primary Sigma Factor"/>
    <property type="match status" value="1"/>
</dbReference>
<dbReference type="Gene3D" id="1.10.220.120">
    <property type="entry name" value="Sigma-70 factor, region 1.1"/>
    <property type="match status" value="1"/>
</dbReference>
<dbReference type="Gene3D" id="1.10.10.10">
    <property type="entry name" value="Winged helix-like DNA-binding domain superfamily/Winged helix DNA-binding domain"/>
    <property type="match status" value="2"/>
</dbReference>
<dbReference type="HAMAP" id="MF_00963">
    <property type="entry name" value="Sigma70_RpoD_SigA"/>
    <property type="match status" value="1"/>
</dbReference>
<dbReference type="InterPro" id="IPR014284">
    <property type="entry name" value="RNA_pol_sigma-70_dom"/>
</dbReference>
<dbReference type="InterPro" id="IPR000943">
    <property type="entry name" value="RNA_pol_sigma70"/>
</dbReference>
<dbReference type="InterPro" id="IPR009042">
    <property type="entry name" value="RNA_pol_sigma70_r1_2"/>
</dbReference>
<dbReference type="InterPro" id="IPR007627">
    <property type="entry name" value="RNA_pol_sigma70_r2"/>
</dbReference>
<dbReference type="InterPro" id="IPR007624">
    <property type="entry name" value="RNA_pol_sigma70_r3"/>
</dbReference>
<dbReference type="InterPro" id="IPR007630">
    <property type="entry name" value="RNA_pol_sigma70_r4"/>
</dbReference>
<dbReference type="InterPro" id="IPR007631">
    <property type="entry name" value="RNA_pol_sigma_70_non-ess"/>
</dbReference>
<dbReference type="InterPro" id="IPR007127">
    <property type="entry name" value="RNA_pol_sigma_70_r1_1"/>
</dbReference>
<dbReference type="InterPro" id="IPR042189">
    <property type="entry name" value="RNA_pol_sigma_70_r1_1_sf"/>
</dbReference>
<dbReference type="InterPro" id="IPR013325">
    <property type="entry name" value="RNA_pol_sigma_r2"/>
</dbReference>
<dbReference type="InterPro" id="IPR013324">
    <property type="entry name" value="RNA_pol_sigma_r3/r4-like"/>
</dbReference>
<dbReference type="InterPro" id="IPR012760">
    <property type="entry name" value="RNA_pol_sigma_RpoD_C"/>
</dbReference>
<dbReference type="InterPro" id="IPR050239">
    <property type="entry name" value="Sigma-70_RNA_pol_init_factors"/>
</dbReference>
<dbReference type="InterPro" id="IPR028630">
    <property type="entry name" value="Sigma70_RpoD"/>
</dbReference>
<dbReference type="InterPro" id="IPR036388">
    <property type="entry name" value="WH-like_DNA-bd_sf"/>
</dbReference>
<dbReference type="NCBIfam" id="NF004208">
    <property type="entry name" value="PRK05658.1"/>
    <property type="match status" value="1"/>
</dbReference>
<dbReference type="NCBIfam" id="TIGR02393">
    <property type="entry name" value="RpoD_Cterm"/>
    <property type="match status" value="1"/>
</dbReference>
<dbReference type="NCBIfam" id="TIGR02937">
    <property type="entry name" value="sigma70-ECF"/>
    <property type="match status" value="1"/>
</dbReference>
<dbReference type="PANTHER" id="PTHR30603">
    <property type="entry name" value="RNA POLYMERASE SIGMA FACTOR RPO"/>
    <property type="match status" value="1"/>
</dbReference>
<dbReference type="PANTHER" id="PTHR30603:SF60">
    <property type="entry name" value="RNA POLYMERASE SIGMA FACTOR RPOD"/>
    <property type="match status" value="1"/>
</dbReference>
<dbReference type="Pfam" id="PF04546">
    <property type="entry name" value="Sigma70_ner"/>
    <property type="match status" value="1"/>
</dbReference>
<dbReference type="Pfam" id="PF03979">
    <property type="entry name" value="Sigma70_r1_1"/>
    <property type="match status" value="1"/>
</dbReference>
<dbReference type="Pfam" id="PF00140">
    <property type="entry name" value="Sigma70_r1_2"/>
    <property type="match status" value="1"/>
</dbReference>
<dbReference type="Pfam" id="PF04542">
    <property type="entry name" value="Sigma70_r2"/>
    <property type="match status" value="1"/>
</dbReference>
<dbReference type="Pfam" id="PF04539">
    <property type="entry name" value="Sigma70_r3"/>
    <property type="match status" value="1"/>
</dbReference>
<dbReference type="Pfam" id="PF04545">
    <property type="entry name" value="Sigma70_r4"/>
    <property type="match status" value="1"/>
</dbReference>
<dbReference type="PRINTS" id="PR00046">
    <property type="entry name" value="SIGMA70FCT"/>
</dbReference>
<dbReference type="SUPFAM" id="SSF88946">
    <property type="entry name" value="Sigma2 domain of RNA polymerase sigma factors"/>
    <property type="match status" value="1"/>
</dbReference>
<dbReference type="SUPFAM" id="SSF88659">
    <property type="entry name" value="Sigma3 and sigma4 domains of RNA polymerase sigma factors"/>
    <property type="match status" value="2"/>
</dbReference>
<dbReference type="PROSITE" id="PS00715">
    <property type="entry name" value="SIGMA70_1"/>
    <property type="match status" value="1"/>
</dbReference>
<dbReference type="PROSITE" id="PS00716">
    <property type="entry name" value="SIGMA70_2"/>
    <property type="match status" value="1"/>
</dbReference>